<sequence length="107" mass="12414">MTEKKNRREKKNPREAKVTFEGLVTEALPNGMFRVRLENDTIILGYISGKIRSSSIRILMGDRVKIEVSRYDSSKGRIIYRLPHKDSKRIEDSKDSEDLKDITDSKD</sequence>
<organism>
    <name type="scientific">Lolium perenne</name>
    <name type="common">Perennial ryegrass</name>
    <dbReference type="NCBI Taxonomy" id="4522"/>
    <lineage>
        <taxon>Eukaryota</taxon>
        <taxon>Viridiplantae</taxon>
        <taxon>Streptophyta</taxon>
        <taxon>Embryophyta</taxon>
        <taxon>Tracheophyta</taxon>
        <taxon>Spermatophyta</taxon>
        <taxon>Magnoliopsida</taxon>
        <taxon>Liliopsida</taxon>
        <taxon>Poales</taxon>
        <taxon>Poaceae</taxon>
        <taxon>BOP clade</taxon>
        <taxon>Pooideae</taxon>
        <taxon>Poodae</taxon>
        <taxon>Poeae</taxon>
        <taxon>Poeae Chloroplast Group 2 (Poeae type)</taxon>
        <taxon>Loliodinae</taxon>
        <taxon>Loliinae</taxon>
        <taxon>Lolium</taxon>
    </lineage>
</organism>
<comment type="function">
    <text evidence="1">One of the essential components for the initiation of protein synthesis. Stabilizes the binding of IF-2 and IF-3 on the 30S subunit to which N-formylmethionyl-tRNA(fMet) subsequently binds. Helps modulate mRNA selection, yielding the 30S pre-initiation complex (PIC). Upon addition of the 50S ribosomal subunit IF-1, IF-2 and IF-3 are released leaving the mature 70S translation initiation complex.</text>
</comment>
<comment type="subunit">
    <text evidence="1">Component of the 30S ribosomal translation pre-initiation complex which assembles on the 30S ribosome in the order IF-2 and IF-3, IF-1 and N-formylmethionyl-tRNA(fMet); mRNA recruitment can occur at any time during PIC assembly.</text>
</comment>
<comment type="subcellular location">
    <subcellularLocation>
        <location evidence="1">Plastid</location>
        <location evidence="1">Chloroplast</location>
    </subcellularLocation>
</comment>
<comment type="similarity">
    <text evidence="1">Belongs to the IF-1 family.</text>
</comment>
<geneLocation type="chloroplast"/>
<dbReference type="EMBL" id="AM777385">
    <property type="protein sequence ID" value="CAO86010.1"/>
    <property type="molecule type" value="Genomic_DNA"/>
</dbReference>
<dbReference type="RefSeq" id="YP_001531316.1">
    <property type="nucleotide sequence ID" value="NC_009950.1"/>
</dbReference>
<dbReference type="SMR" id="A8Y9C1"/>
<dbReference type="GeneID" id="5696566"/>
<dbReference type="KEGG" id="lper:5696566"/>
<dbReference type="GO" id="GO:0009507">
    <property type="term" value="C:chloroplast"/>
    <property type="evidence" value="ECO:0007669"/>
    <property type="project" value="UniProtKB-SubCell"/>
</dbReference>
<dbReference type="GO" id="GO:0005829">
    <property type="term" value="C:cytosol"/>
    <property type="evidence" value="ECO:0007669"/>
    <property type="project" value="TreeGrafter"/>
</dbReference>
<dbReference type="GO" id="GO:0043022">
    <property type="term" value="F:ribosome binding"/>
    <property type="evidence" value="ECO:0007669"/>
    <property type="project" value="UniProtKB-UniRule"/>
</dbReference>
<dbReference type="GO" id="GO:0019843">
    <property type="term" value="F:rRNA binding"/>
    <property type="evidence" value="ECO:0007669"/>
    <property type="project" value="UniProtKB-UniRule"/>
</dbReference>
<dbReference type="GO" id="GO:0003743">
    <property type="term" value="F:translation initiation factor activity"/>
    <property type="evidence" value="ECO:0007669"/>
    <property type="project" value="UniProtKB-UniRule"/>
</dbReference>
<dbReference type="CDD" id="cd04451">
    <property type="entry name" value="S1_IF1"/>
    <property type="match status" value="1"/>
</dbReference>
<dbReference type="FunFam" id="2.40.50.140:FF:000019">
    <property type="entry name" value="Translation initiation factor IF-1, chloroplastic"/>
    <property type="match status" value="1"/>
</dbReference>
<dbReference type="Gene3D" id="2.40.50.140">
    <property type="entry name" value="Nucleic acid-binding proteins"/>
    <property type="match status" value="1"/>
</dbReference>
<dbReference type="HAMAP" id="MF_00075">
    <property type="entry name" value="IF_1"/>
    <property type="match status" value="1"/>
</dbReference>
<dbReference type="InterPro" id="IPR012340">
    <property type="entry name" value="NA-bd_OB-fold"/>
</dbReference>
<dbReference type="InterPro" id="IPR006196">
    <property type="entry name" value="RNA-binding_domain_S1_IF1"/>
</dbReference>
<dbReference type="InterPro" id="IPR003029">
    <property type="entry name" value="S1_domain"/>
</dbReference>
<dbReference type="InterPro" id="IPR004368">
    <property type="entry name" value="TIF_IF1"/>
</dbReference>
<dbReference type="NCBIfam" id="TIGR00008">
    <property type="entry name" value="infA"/>
    <property type="match status" value="1"/>
</dbReference>
<dbReference type="PANTHER" id="PTHR33370">
    <property type="entry name" value="TRANSLATION INITIATION FACTOR IF-1, CHLOROPLASTIC"/>
    <property type="match status" value="1"/>
</dbReference>
<dbReference type="PANTHER" id="PTHR33370:SF1">
    <property type="entry name" value="TRANSLATION INITIATION FACTOR IF-1, CHLOROPLASTIC"/>
    <property type="match status" value="1"/>
</dbReference>
<dbReference type="Pfam" id="PF01176">
    <property type="entry name" value="eIF-1a"/>
    <property type="match status" value="1"/>
</dbReference>
<dbReference type="SMART" id="SM00316">
    <property type="entry name" value="S1"/>
    <property type="match status" value="1"/>
</dbReference>
<dbReference type="SUPFAM" id="SSF50249">
    <property type="entry name" value="Nucleic acid-binding proteins"/>
    <property type="match status" value="1"/>
</dbReference>
<dbReference type="PROSITE" id="PS50832">
    <property type="entry name" value="S1_IF1_TYPE"/>
    <property type="match status" value="1"/>
</dbReference>
<proteinExistence type="inferred from homology"/>
<gene>
    <name evidence="1" type="primary">infA</name>
    <name type="ordered locus">LopeCp076</name>
</gene>
<reference key="1">
    <citation type="journal article" date="2008" name="PLoS ONE">
        <title>An optimized chloroplast DNA extraction protocol for grasses (Poaceae) proves suitable for whole plastid genome sequencing and SNP detection.</title>
        <authorList>
            <person name="Diekmann K."/>
            <person name="Hodkinson T.R."/>
            <person name="Fricke E."/>
            <person name="Barth S."/>
        </authorList>
    </citation>
    <scope>NUCLEOTIDE SEQUENCE [LARGE SCALE GENOMIC DNA]</scope>
    <source>
        <strain>cv. Cashel</strain>
    </source>
</reference>
<evidence type="ECO:0000255" key="1">
    <source>
        <dbReference type="HAMAP-Rule" id="MF_00075"/>
    </source>
</evidence>
<feature type="chain" id="PRO_0000338965" description="Translation initiation factor IF-1, chloroplastic">
    <location>
        <begin position="1"/>
        <end position="107"/>
    </location>
</feature>
<feature type="domain" description="S1-like" evidence="1">
    <location>
        <begin position="8"/>
        <end position="83"/>
    </location>
</feature>
<keyword id="KW-0150">Chloroplast</keyword>
<keyword id="KW-0396">Initiation factor</keyword>
<keyword id="KW-0934">Plastid</keyword>
<keyword id="KW-0648">Protein biosynthesis</keyword>
<keyword id="KW-0694">RNA-binding</keyword>
<keyword id="KW-0699">rRNA-binding</keyword>
<name>IF1C_LOLPR</name>
<protein>
    <recommendedName>
        <fullName evidence="1">Translation initiation factor IF-1, chloroplastic</fullName>
    </recommendedName>
</protein>
<accession>A8Y9C1</accession>